<organism>
    <name type="scientific">Pseudomonas putida (strain ATCC 700007 / DSM 6899 / JCM 31910 / BCRC 17059 / LMG 24140 / F1)</name>
    <dbReference type="NCBI Taxonomy" id="351746"/>
    <lineage>
        <taxon>Bacteria</taxon>
        <taxon>Pseudomonadati</taxon>
        <taxon>Pseudomonadota</taxon>
        <taxon>Gammaproteobacteria</taxon>
        <taxon>Pseudomonadales</taxon>
        <taxon>Pseudomonadaceae</taxon>
        <taxon>Pseudomonas</taxon>
    </lineage>
</organism>
<evidence type="ECO:0000255" key="1">
    <source>
        <dbReference type="HAMAP-Rule" id="MF_01599"/>
    </source>
</evidence>
<accession>A5W1F0</accession>
<proteinExistence type="inferred from homology"/>
<name>NHAB_PSEP1</name>
<gene>
    <name evidence="1" type="primary">nhaB</name>
    <name type="ordered locus">Pput_1807</name>
</gene>
<dbReference type="EMBL" id="CP000712">
    <property type="protein sequence ID" value="ABQ77960.1"/>
    <property type="molecule type" value="Genomic_DNA"/>
</dbReference>
<dbReference type="SMR" id="A5W1F0"/>
<dbReference type="KEGG" id="ppf:Pput_1807"/>
<dbReference type="eggNOG" id="COG3067">
    <property type="taxonomic scope" value="Bacteria"/>
</dbReference>
<dbReference type="HOGENOM" id="CLU_041110_0_0_6"/>
<dbReference type="GO" id="GO:0005886">
    <property type="term" value="C:plasma membrane"/>
    <property type="evidence" value="ECO:0007669"/>
    <property type="project" value="UniProtKB-SubCell"/>
</dbReference>
<dbReference type="GO" id="GO:0015385">
    <property type="term" value="F:sodium:proton antiporter activity"/>
    <property type="evidence" value="ECO:0007669"/>
    <property type="project" value="InterPro"/>
</dbReference>
<dbReference type="HAMAP" id="MF_01599">
    <property type="entry name" value="NhaB"/>
    <property type="match status" value="1"/>
</dbReference>
<dbReference type="InterPro" id="IPR004671">
    <property type="entry name" value="Na+/H+_antiporter_NhaB"/>
</dbReference>
<dbReference type="NCBIfam" id="NF007093">
    <property type="entry name" value="PRK09547.1"/>
    <property type="match status" value="1"/>
</dbReference>
<dbReference type="PANTHER" id="PTHR43302:SF1">
    <property type="entry name" value="NA(+)_H(+) ANTIPORTER NHAB"/>
    <property type="match status" value="1"/>
</dbReference>
<dbReference type="PANTHER" id="PTHR43302">
    <property type="entry name" value="TRANSPORTER ARSB-RELATED"/>
    <property type="match status" value="1"/>
</dbReference>
<dbReference type="Pfam" id="PF06450">
    <property type="entry name" value="NhaB"/>
    <property type="match status" value="1"/>
</dbReference>
<keyword id="KW-0050">Antiport</keyword>
<keyword id="KW-0997">Cell inner membrane</keyword>
<keyword id="KW-1003">Cell membrane</keyword>
<keyword id="KW-0406">Ion transport</keyword>
<keyword id="KW-0472">Membrane</keyword>
<keyword id="KW-0915">Sodium</keyword>
<keyword id="KW-0739">Sodium transport</keyword>
<keyword id="KW-0812">Transmembrane</keyword>
<keyword id="KW-1133">Transmembrane helix</keyword>
<keyword id="KW-0813">Transport</keyword>
<comment type="function">
    <text evidence="1">Na(+)/H(+) antiporter that extrudes sodium in exchange for external protons.</text>
</comment>
<comment type="catalytic activity">
    <reaction evidence="1">
        <text>2 Na(+)(in) + 3 H(+)(out) = 2 Na(+)(out) + 3 H(+)(in)</text>
        <dbReference type="Rhea" id="RHEA:29247"/>
        <dbReference type="ChEBI" id="CHEBI:15378"/>
        <dbReference type="ChEBI" id="CHEBI:29101"/>
    </reaction>
    <physiologicalReaction direction="left-to-right" evidence="1">
        <dbReference type="Rhea" id="RHEA:29248"/>
    </physiologicalReaction>
</comment>
<comment type="subcellular location">
    <subcellularLocation>
        <location evidence="1">Cell inner membrane</location>
        <topology evidence="1">Multi-pass membrane protein</topology>
    </subcellularLocation>
</comment>
<comment type="similarity">
    <text evidence="1">Belongs to the NhaB Na(+)/H(+) (TC 2.A.34) antiporter family.</text>
</comment>
<reference key="1">
    <citation type="submission" date="2007-05" db="EMBL/GenBank/DDBJ databases">
        <title>Complete sequence of Pseudomonas putida F1.</title>
        <authorList>
            <consortium name="US DOE Joint Genome Institute"/>
            <person name="Copeland A."/>
            <person name="Lucas S."/>
            <person name="Lapidus A."/>
            <person name="Barry K."/>
            <person name="Detter J.C."/>
            <person name="Glavina del Rio T."/>
            <person name="Hammon N."/>
            <person name="Israni S."/>
            <person name="Dalin E."/>
            <person name="Tice H."/>
            <person name="Pitluck S."/>
            <person name="Chain P."/>
            <person name="Malfatti S."/>
            <person name="Shin M."/>
            <person name="Vergez L."/>
            <person name="Schmutz J."/>
            <person name="Larimer F."/>
            <person name="Land M."/>
            <person name="Hauser L."/>
            <person name="Kyrpides N."/>
            <person name="Lykidis A."/>
            <person name="Parales R."/>
            <person name="Richardson P."/>
        </authorList>
    </citation>
    <scope>NUCLEOTIDE SEQUENCE [LARGE SCALE GENOMIC DNA]</scope>
    <source>
        <strain>ATCC 700007 / DSM 6899 / JCM 31910 / BCRC 17059 / LMG 24140 / F1</strain>
    </source>
</reference>
<feature type="chain" id="PRO_0000333112" description="Na(+)/H(+) antiporter NhaB">
    <location>
        <begin position="1"/>
        <end position="500"/>
    </location>
</feature>
<feature type="transmembrane region" description="Helical" evidence="1">
    <location>
        <begin position="11"/>
        <end position="31"/>
    </location>
</feature>
<feature type="transmembrane region" description="Helical" evidence="1">
    <location>
        <begin position="34"/>
        <end position="54"/>
    </location>
</feature>
<feature type="transmembrane region" description="Helical" evidence="1">
    <location>
        <begin position="58"/>
        <end position="78"/>
    </location>
</feature>
<feature type="transmembrane region" description="Helical" evidence="1">
    <location>
        <begin position="96"/>
        <end position="116"/>
    </location>
</feature>
<feature type="transmembrane region" description="Helical" evidence="1">
    <location>
        <begin position="121"/>
        <end position="141"/>
    </location>
</feature>
<feature type="transmembrane region" description="Helical" evidence="1">
    <location>
        <begin position="145"/>
        <end position="165"/>
    </location>
</feature>
<feature type="transmembrane region" description="Helical" evidence="1">
    <location>
        <begin position="205"/>
        <end position="225"/>
    </location>
</feature>
<feature type="transmembrane region" description="Helical" evidence="1">
    <location>
        <begin position="241"/>
        <end position="261"/>
    </location>
</feature>
<feature type="transmembrane region" description="Helical" evidence="1">
    <location>
        <begin position="311"/>
        <end position="331"/>
    </location>
</feature>
<feature type="transmembrane region" description="Helical" evidence="1">
    <location>
        <begin position="350"/>
        <end position="370"/>
    </location>
</feature>
<feature type="transmembrane region" description="Helical" evidence="1">
    <location>
        <begin position="394"/>
        <end position="414"/>
    </location>
</feature>
<feature type="transmembrane region" description="Helical" evidence="1">
    <location>
        <begin position="450"/>
        <end position="470"/>
    </location>
</feature>
<feature type="transmembrane region" description="Helical" evidence="1">
    <location>
        <begin position="477"/>
        <end position="497"/>
    </location>
</feature>
<sequence length="500" mass="54332">MSRSLTGALAHGFLGQSPLWYKAVICLFLVLNPLLLATIGPAAAGWALVIEFIFTLGMALKCYPLMPGGLLLIEALLLQMTTPQALYEELQHNFPVILLLMFMVAGIHFMKELLLFLFSRILLGVRSKAMLSLLFCVLSAFLSAFLDALTVTAVIISAAVGFYAVYHRVASGANPREDSALDSDQQVAQLHRDDLNQFRAFLRSLLMHGAVGTALGGVCTLVGEPQNLLIGHEMGWHFADFLLKVAPVSIPVLGAGLLTCVLLEKLRLFGYGTLMPETVRQVLAAYAAEDDAARTQAQRIALWVQGLAALILIICLGLHVAEVGLIGLMVIVLITAFTGITDEHRLGRAFQDAMPFTSLLVVFFAVVAVIHQQQLFSPLISWVLTLPAEQQPGMLYLANGLLSAISDNVFVATIYITEVKQAFLNGSMSREHFETLAVAINTGTNLPSVATPNGQAAFLFLLTSAIAPLIRLSYGRMVWMALPYTVVMGGLGWWAVTYWL</sequence>
<protein>
    <recommendedName>
        <fullName evidence="1">Na(+)/H(+) antiporter NhaB</fullName>
    </recommendedName>
    <alternativeName>
        <fullName evidence="1">Sodium/proton antiporter NhaB</fullName>
    </alternativeName>
</protein>